<evidence type="ECO:0000250" key="1">
    <source>
        <dbReference type="UniProtKB" id="P05305"/>
    </source>
</evidence>
<evidence type="ECO:0000250" key="2">
    <source>
        <dbReference type="UniProtKB" id="P09558"/>
    </source>
</evidence>
<evidence type="ECO:0000250" key="3">
    <source>
        <dbReference type="UniProtKB" id="P22387"/>
    </source>
</evidence>
<evidence type="ECO:0000250" key="4">
    <source>
        <dbReference type="UniProtKB" id="P22388"/>
    </source>
</evidence>
<evidence type="ECO:0000256" key="5">
    <source>
        <dbReference type="SAM" id="MobiDB-lite"/>
    </source>
</evidence>
<evidence type="ECO:0000305" key="6"/>
<reference key="1">
    <citation type="journal article" date="1995" name="Biochem. Mol. Biol. Int.">
        <title>Endothelin-1 production and endothelin converting enzyme expression by guinea pig airway epithelial cells.</title>
        <authorList>
            <person name="Shima H."/>
            <person name="Yamanouchi M."/>
            <person name="Omori K."/>
            <person name="Sugiura M."/>
            <person name="Kawashima K."/>
            <person name="Sato T."/>
        </authorList>
    </citation>
    <scope>NUCLEOTIDE SEQUENCE [MRNA]</scope>
</reference>
<organism>
    <name type="scientific">Cavia porcellus</name>
    <name type="common">Guinea pig</name>
    <dbReference type="NCBI Taxonomy" id="10141"/>
    <lineage>
        <taxon>Eukaryota</taxon>
        <taxon>Metazoa</taxon>
        <taxon>Chordata</taxon>
        <taxon>Craniata</taxon>
        <taxon>Vertebrata</taxon>
        <taxon>Euteleostomi</taxon>
        <taxon>Mammalia</taxon>
        <taxon>Eutheria</taxon>
        <taxon>Euarchontoglires</taxon>
        <taxon>Glires</taxon>
        <taxon>Rodentia</taxon>
        <taxon>Hystricomorpha</taxon>
        <taxon>Caviidae</taxon>
        <taxon>Cavia</taxon>
    </lineage>
</organism>
<proteinExistence type="evidence at transcript level"/>
<accession>P97740</accession>
<protein>
    <recommendedName>
        <fullName>Endothelin-1</fullName>
        <shortName>ET-1</shortName>
    </recommendedName>
    <alternativeName>
        <fullName>Preproendothelin-1</fullName>
        <shortName>PPET1</shortName>
    </alternativeName>
    <component>
        <recommendedName>
            <fullName>Big endothelin-1</fullName>
        </recommendedName>
    </component>
</protein>
<feature type="propeptide" id="PRO_0000008052" evidence="4">
    <location>
        <begin position="1" status="less than"/>
        <end position="33"/>
    </location>
</feature>
<feature type="peptide" id="PRO_0000436395" description="Big endothelin-1" evidence="4">
    <location>
        <begin position="36"/>
        <end position="74"/>
    </location>
</feature>
<feature type="peptide" id="PRO_0000008053" description="Endothelin-1">
    <location>
        <begin position="36"/>
        <end position="56"/>
    </location>
</feature>
<feature type="propeptide" id="PRO_0000008054">
    <location>
        <begin position="57"/>
        <end position="149" status="greater than"/>
    </location>
</feature>
<feature type="region of interest" description="Disordered" evidence="5">
    <location>
        <begin position="6"/>
        <end position="26"/>
    </location>
</feature>
<feature type="region of interest" description="Endothelin-like">
    <location>
        <begin position="93"/>
        <end position="107"/>
    </location>
</feature>
<feature type="site" description="Cleavage; by KEL" evidence="1">
    <location>
        <begin position="56"/>
        <end position="57"/>
    </location>
</feature>
<feature type="disulfide bond" evidence="1">
    <location>
        <begin position="36"/>
        <end position="50"/>
    </location>
</feature>
<feature type="disulfide bond" evidence="1">
    <location>
        <begin position="38"/>
        <end position="46"/>
    </location>
</feature>
<feature type="non-terminal residue">
    <location>
        <position position="1"/>
    </location>
</feature>
<feature type="non-terminal residue">
    <location>
        <position position="149"/>
    </location>
</feature>
<dbReference type="EMBL" id="S82654">
    <property type="protein sequence ID" value="AAB46735.1"/>
    <property type="molecule type" value="mRNA"/>
</dbReference>
<dbReference type="SMR" id="P97740"/>
<dbReference type="FunCoup" id="P97740">
    <property type="interactions" value="761"/>
</dbReference>
<dbReference type="STRING" id="10141.ENSCPOP00000028977"/>
<dbReference type="eggNOG" id="ENOG502S1NV">
    <property type="taxonomic scope" value="Eukaryota"/>
</dbReference>
<dbReference type="InParanoid" id="P97740"/>
<dbReference type="Proteomes" id="UP000005447">
    <property type="component" value="Unassembled WGS sequence"/>
</dbReference>
<dbReference type="GO" id="GO:0005615">
    <property type="term" value="C:extracellular space"/>
    <property type="evidence" value="ECO:0007669"/>
    <property type="project" value="TreeGrafter"/>
</dbReference>
<dbReference type="GO" id="GO:0031707">
    <property type="term" value="F:endothelin A receptor binding"/>
    <property type="evidence" value="ECO:0007669"/>
    <property type="project" value="TreeGrafter"/>
</dbReference>
<dbReference type="GO" id="GO:0031708">
    <property type="term" value="F:endothelin B receptor binding"/>
    <property type="evidence" value="ECO:0007669"/>
    <property type="project" value="TreeGrafter"/>
</dbReference>
<dbReference type="GO" id="GO:0005179">
    <property type="term" value="F:hormone activity"/>
    <property type="evidence" value="ECO:0007669"/>
    <property type="project" value="TreeGrafter"/>
</dbReference>
<dbReference type="GO" id="GO:0086100">
    <property type="term" value="P:endothelin receptor signaling pathway"/>
    <property type="evidence" value="ECO:0000250"/>
    <property type="project" value="UniProtKB"/>
</dbReference>
<dbReference type="GO" id="GO:0006874">
    <property type="term" value="P:intracellular calcium ion homeostasis"/>
    <property type="evidence" value="ECO:0007669"/>
    <property type="project" value="TreeGrafter"/>
</dbReference>
<dbReference type="GO" id="GO:1900182">
    <property type="term" value="P:positive regulation of protein localization to nucleus"/>
    <property type="evidence" value="ECO:0000250"/>
    <property type="project" value="UniProtKB"/>
</dbReference>
<dbReference type="GO" id="GO:0003100">
    <property type="term" value="P:regulation of systemic arterial blood pressure by endothelin"/>
    <property type="evidence" value="ECO:0007669"/>
    <property type="project" value="TreeGrafter"/>
</dbReference>
<dbReference type="GO" id="GO:0019229">
    <property type="term" value="P:regulation of vasoconstriction"/>
    <property type="evidence" value="ECO:0007669"/>
    <property type="project" value="InterPro"/>
</dbReference>
<dbReference type="GO" id="GO:0014826">
    <property type="term" value="P:vein smooth muscle contraction"/>
    <property type="evidence" value="ECO:0007669"/>
    <property type="project" value="TreeGrafter"/>
</dbReference>
<dbReference type="InterPro" id="IPR020475">
    <property type="entry name" value="Endothelin"/>
</dbReference>
<dbReference type="InterPro" id="IPR019764">
    <property type="entry name" value="Endothelin_toxin_CS"/>
</dbReference>
<dbReference type="InterPro" id="IPR001928">
    <property type="entry name" value="Endothln-like_toxin"/>
</dbReference>
<dbReference type="PANTHER" id="PTHR13874">
    <property type="entry name" value="ENDOTHELIN"/>
    <property type="match status" value="1"/>
</dbReference>
<dbReference type="PANTHER" id="PTHR13874:SF10">
    <property type="entry name" value="ENDOTHELIN-1"/>
    <property type="match status" value="1"/>
</dbReference>
<dbReference type="Pfam" id="PF00322">
    <property type="entry name" value="Endothelin"/>
    <property type="match status" value="1"/>
</dbReference>
<dbReference type="PRINTS" id="PR00365">
    <property type="entry name" value="ENDOTHELIN"/>
</dbReference>
<dbReference type="SMART" id="SM00272">
    <property type="entry name" value="END"/>
    <property type="match status" value="2"/>
</dbReference>
<dbReference type="PROSITE" id="PS00270">
    <property type="entry name" value="ENDOTHELIN"/>
    <property type="match status" value="2"/>
</dbReference>
<comment type="function">
    <text evidence="1 2 3">Endothelins are endothelium-derived vasoconstrictor peptides (By similarity). Probable ligand for G-protein coupled receptors EDNRA and EDNRB which activates PTK2B, BCAR1, BCAR3 and, GTPases RAP1 and RHOA cascade in glomerular mesangial cells (By similarity). Also binds the DEAR/FBXW7-AS1 receptor (By similarity). Promotes mesenteric arterial wall remodeling via activation of ROCK signaling and subsequent colocalization of NFATC3 with F-actin filaments (By similarity). NFATC3 then translocates to the nucleus where it subsequently promotes the transcription of the smooth muscle hypertrophy and differentiation marker ACTA2 (By similarity).</text>
</comment>
<comment type="subcellular location">
    <subcellularLocation>
        <location>Secreted</location>
    </subcellularLocation>
</comment>
<comment type="similarity">
    <text evidence="6">Belongs to the endothelin/sarafotoxin family.</text>
</comment>
<name>EDN1_CAVPO</name>
<gene>
    <name type="primary">EDN1</name>
</gene>
<sequence length="149" mass="16455">AAETVVSGAELSLTANSGGEKTPPHAPGLLRRSKRCSCSSLMDKECVYFCHLDIIWVNTPGHIAPYGLGGPFRSKRSLKELFPTKATEHRNRCQCANQKDKKCWNFCQAGKELSSQDTMQKGWDNHKKGKDCSKLGKKCISQQLGNGKK</sequence>
<keyword id="KW-0165">Cleavage on pair of basic residues</keyword>
<keyword id="KW-1015">Disulfide bond</keyword>
<keyword id="KW-1185">Reference proteome</keyword>
<keyword id="KW-0964">Secreted</keyword>
<keyword id="KW-0838">Vasoactive</keyword>
<keyword id="KW-0839">Vasoconstrictor</keyword>